<organism>
    <name type="scientific">Lycosa singoriensis</name>
    <name type="common">Wolf spider</name>
    <name type="synonym">Aranea singoriensis</name>
    <dbReference type="NCBI Taxonomy" id="434756"/>
    <lineage>
        <taxon>Eukaryota</taxon>
        <taxon>Metazoa</taxon>
        <taxon>Ecdysozoa</taxon>
        <taxon>Arthropoda</taxon>
        <taxon>Chelicerata</taxon>
        <taxon>Arachnida</taxon>
        <taxon>Araneae</taxon>
        <taxon>Araneomorphae</taxon>
        <taxon>Entelegynae</taxon>
        <taxon>Lycosoidea</taxon>
        <taxon>Lycosidae</taxon>
        <taxon>Lycosa</taxon>
    </lineage>
</organism>
<accession>B6DCV3</accession>
<feature type="signal peptide" evidence="2">
    <location>
        <begin position="1"/>
        <end position="21"/>
    </location>
</feature>
<feature type="propeptide" id="PRO_0000401727" evidence="1">
    <location>
        <begin position="22"/>
        <end position="25"/>
    </location>
</feature>
<feature type="chain" id="PRO_0000401728" description="U6-lycotoxin-Ls1d">
    <location>
        <begin position="26"/>
        <end position="75"/>
    </location>
</feature>
<proteinExistence type="evidence at transcript level"/>
<keyword id="KW-1015">Disulfide bond</keyword>
<keyword id="KW-0964">Secreted</keyword>
<keyword id="KW-0732">Signal</keyword>
<keyword id="KW-0800">Toxin</keyword>
<comment type="subcellular location">
    <subcellularLocation>
        <location evidence="1">Secreted</location>
    </subcellularLocation>
</comment>
<comment type="tissue specificity">
    <text>Expressed by the venom gland.</text>
</comment>
<comment type="PTM">
    <text evidence="1">Contains 4 disulfide bonds.</text>
</comment>
<comment type="similarity">
    <text evidence="3">Belongs to the neurotoxin 19 (CSTX) family. 06 (U6-Lctx) subfamily.</text>
</comment>
<dbReference type="EMBL" id="EU926037">
    <property type="protein sequence ID" value="ACI41369.1"/>
    <property type="molecule type" value="mRNA"/>
</dbReference>
<dbReference type="EMBL" id="FM864041">
    <property type="protein sequence ID" value="CAS03638.1"/>
    <property type="molecule type" value="mRNA"/>
</dbReference>
<dbReference type="SMR" id="B6DCV3"/>
<dbReference type="ArachnoServer" id="AS000975">
    <property type="toxin name" value="U6-lycotoxin-Ls1d"/>
</dbReference>
<dbReference type="GO" id="GO:0005576">
    <property type="term" value="C:extracellular region"/>
    <property type="evidence" value="ECO:0007669"/>
    <property type="project" value="UniProtKB-SubCell"/>
</dbReference>
<dbReference type="GO" id="GO:0090729">
    <property type="term" value="F:toxin activity"/>
    <property type="evidence" value="ECO:0007669"/>
    <property type="project" value="UniProtKB-KW"/>
</dbReference>
<dbReference type="InterPro" id="IPR019553">
    <property type="entry name" value="Spider_toxin_CSTX_knottin"/>
</dbReference>
<dbReference type="Pfam" id="PF10530">
    <property type="entry name" value="Toxin_35"/>
    <property type="match status" value="1"/>
</dbReference>
<name>TX603_LYCSI</name>
<protein>
    <recommendedName>
        <fullName>U6-lycotoxin-Ls1d</fullName>
    </recommendedName>
    <alternativeName>
        <fullName>Toxin-like structure LSTX-F3</fullName>
    </alternativeName>
</protein>
<sequence length="75" mass="8402">MKLLLFTALVLVVISLIEVEAENERACIPLEKECTKTPGNCCSGLKCDCYRRFEQGVAKGIQCWCIEKDVTYKGV</sequence>
<evidence type="ECO:0000250" key="1"/>
<evidence type="ECO:0000255" key="2"/>
<evidence type="ECO:0000305" key="3"/>
<reference key="1">
    <citation type="journal article" date="2010" name="Zoology">
        <title>Transcriptome analysis of the venom glands of the Chinese wolf spider Lycosa singoriensis.</title>
        <authorList>
            <person name="Zhang Y."/>
            <person name="Chen J."/>
            <person name="Tang X."/>
            <person name="Wang F."/>
            <person name="Jiang L."/>
            <person name="Xiong X."/>
            <person name="Wang M."/>
            <person name="Rong M."/>
            <person name="Liu Z."/>
            <person name="Liang S."/>
        </authorList>
    </citation>
    <scope>NUCLEOTIDE SEQUENCE [LARGE SCALE MRNA]</scope>
    <source>
        <tissue>Venom gland</tissue>
    </source>
</reference>